<sequence>MTIAIGQNQERGIFDLIDDWLKKDRFVFVGWSGLLLFPTAYLAVGGWMTGTTFVTSWYTHGLASSYLEGCNFLTAAVSSPANSMGHSLLLLWGPEAQGDFTRWCQIGGLWTFVALHGSFGLIGFCLRQFEIARLVGIRPYNAIAFSGPIAVFVSVFLLYPLGQASWFFAPSFGVAAIFRFLLFLQGFHNWTLNPFHMMGVAGILGGALLCAIHGATVENTLFEDGDAANTFRAFTPTQSEETYSMVTANRFWSQIFGVAFSNKRWLHFFMLFVPVTGLWTSAIGIVGLALNLRAYDFVSQELRAAEDPEFETFYTKNILLNEGIRAWMAAQDQPHENFVFPEEVLPRGNAL</sequence>
<name>PSBD_PHATC</name>
<keyword id="KW-0148">Chlorophyll</keyword>
<keyword id="KW-0150">Chloroplast</keyword>
<keyword id="KW-0157">Chromophore</keyword>
<keyword id="KW-0249">Electron transport</keyword>
<keyword id="KW-0408">Iron</keyword>
<keyword id="KW-0460">Magnesium</keyword>
<keyword id="KW-0472">Membrane</keyword>
<keyword id="KW-0479">Metal-binding</keyword>
<keyword id="KW-0560">Oxidoreductase</keyword>
<keyword id="KW-0602">Photosynthesis</keyword>
<keyword id="KW-0604">Photosystem II</keyword>
<keyword id="KW-0934">Plastid</keyword>
<keyword id="KW-1185">Reference proteome</keyword>
<keyword id="KW-0793">Thylakoid</keyword>
<keyword id="KW-0812">Transmembrane</keyword>
<keyword id="KW-1133">Transmembrane helix</keyword>
<keyword id="KW-0813">Transport</keyword>
<organism>
    <name type="scientific">Phaeodactylum tricornutum (strain CCAP 1055/1)</name>
    <dbReference type="NCBI Taxonomy" id="556484"/>
    <lineage>
        <taxon>Eukaryota</taxon>
        <taxon>Sar</taxon>
        <taxon>Stramenopiles</taxon>
        <taxon>Ochrophyta</taxon>
        <taxon>Bacillariophyta</taxon>
        <taxon>Bacillariophyceae</taxon>
        <taxon>Bacillariophycidae</taxon>
        <taxon>Naviculales</taxon>
        <taxon>Phaeodactylaceae</taxon>
        <taxon>Phaeodactylum</taxon>
    </lineage>
</organism>
<reference key="1">
    <citation type="journal article" date="2007" name="Mol. Genet. Genomics">
        <title>Chloroplast genomes of the diatoms Phaeodactylum tricornutum and Thalassiosira pseudonana: comparison with other plastid genomes of the red lineage.</title>
        <authorList>
            <person name="Oudot-Le Secq M.-P."/>
            <person name="Grimwood J."/>
            <person name="Shapiro H."/>
            <person name="Armbrust E.V."/>
            <person name="Bowler C."/>
            <person name="Green B.R."/>
        </authorList>
    </citation>
    <scope>NUCLEOTIDE SEQUENCE [LARGE SCALE GENOMIC DNA]</scope>
    <source>
        <strain>CCAP 1055/1</strain>
    </source>
</reference>
<proteinExistence type="inferred from homology"/>
<evidence type="ECO:0000255" key="1">
    <source>
        <dbReference type="HAMAP-Rule" id="MF_01383"/>
    </source>
</evidence>
<protein>
    <recommendedName>
        <fullName evidence="1">Photosystem II D2 protein</fullName>
        <shortName evidence="1">PSII D2 protein</shortName>
        <ecNumber evidence="1">1.10.3.9</ecNumber>
    </recommendedName>
    <alternativeName>
        <fullName evidence="1">Photosystem Q(A) protein</fullName>
    </alternativeName>
</protein>
<gene>
    <name evidence="1" type="primary">psbD</name>
</gene>
<accession>A0T097</accession>
<comment type="function">
    <text evidence="1">Photosystem II (PSII) is a light-driven water:plastoquinone oxidoreductase that uses light energy to abstract electrons from H(2)O, generating O(2) and a proton gradient subsequently used for ATP formation. It consists of a core antenna complex that captures photons, and an electron transfer chain that converts photonic excitation into a charge separation. The D1/D2 (PsbA/PsbD) reaction center heterodimer binds P680, the primary electron donor of PSII as well as several subsequent electron acceptors. D2 is needed for assembly of a stable PSII complex.</text>
</comment>
<comment type="catalytic activity">
    <reaction evidence="1">
        <text>2 a plastoquinone + 4 hnu + 2 H2O = 2 a plastoquinol + O2</text>
        <dbReference type="Rhea" id="RHEA:36359"/>
        <dbReference type="Rhea" id="RHEA-COMP:9561"/>
        <dbReference type="Rhea" id="RHEA-COMP:9562"/>
        <dbReference type="ChEBI" id="CHEBI:15377"/>
        <dbReference type="ChEBI" id="CHEBI:15379"/>
        <dbReference type="ChEBI" id="CHEBI:17757"/>
        <dbReference type="ChEBI" id="CHEBI:30212"/>
        <dbReference type="ChEBI" id="CHEBI:62192"/>
        <dbReference type="EC" id="1.10.3.9"/>
    </reaction>
</comment>
<comment type="cofactor">
    <text evidence="1">The D1/D2 heterodimer binds P680, chlorophylls that are the primary electron donor of PSII, and subsequent electron acceptors. It shares a non-heme iron and each subunit binds pheophytin, quinone, additional chlorophylls, carotenoids and lipids. There is also a Cl(-1) ion associated with D1 and D2, which is required for oxygen evolution. The PSII complex binds additional chlorophylls, carotenoids and specific lipids.</text>
</comment>
<comment type="subunit">
    <text evidence="1">PSII is composed of 1 copy each of membrane proteins PsbA, PsbB, PsbC, PsbD, PsbE, PsbF, PsbH, PsbI, PsbJ, PsbK, PsbL, PsbM, PsbT, PsbX, PsbY, PsbZ, Psb30/Ycf12, at least 3 peripheral proteins of the oxygen-evolving complex and a large number of cofactors. It forms dimeric complexes.</text>
</comment>
<comment type="subcellular location">
    <subcellularLocation>
        <location evidence="1">Plastid</location>
        <location evidence="1">Chloroplast thylakoid membrane</location>
        <topology evidence="1">Multi-pass membrane protein</topology>
    </subcellularLocation>
</comment>
<comment type="miscellaneous">
    <text evidence="1">2 of the reaction center chlorophylls (ChlD1 and ChlD2) are entirely coordinated by water.</text>
</comment>
<comment type="similarity">
    <text evidence="1">Belongs to the reaction center PufL/M/PsbA/D family.</text>
</comment>
<geneLocation type="chloroplast"/>
<dbReference type="EC" id="1.10.3.9" evidence="1"/>
<dbReference type="EMBL" id="EF067920">
    <property type="protein sequence ID" value="ABK20600.1"/>
    <property type="molecule type" value="Genomic_DNA"/>
</dbReference>
<dbReference type="RefSeq" id="YP_874377.1">
    <property type="nucleotide sequence ID" value="NC_008588.1"/>
</dbReference>
<dbReference type="SMR" id="A0T097"/>
<dbReference type="STRING" id="556484.A0T097"/>
<dbReference type="GeneID" id="4524620"/>
<dbReference type="InParanoid" id="A0T097"/>
<dbReference type="Proteomes" id="UP000000759">
    <property type="component" value="Chloroplast"/>
</dbReference>
<dbReference type="GO" id="GO:0009535">
    <property type="term" value="C:chloroplast thylakoid membrane"/>
    <property type="evidence" value="ECO:0007669"/>
    <property type="project" value="UniProtKB-SubCell"/>
</dbReference>
<dbReference type="GO" id="GO:0009523">
    <property type="term" value="C:photosystem II"/>
    <property type="evidence" value="ECO:0007669"/>
    <property type="project" value="UniProtKB-KW"/>
</dbReference>
<dbReference type="GO" id="GO:0016168">
    <property type="term" value="F:chlorophyll binding"/>
    <property type="evidence" value="ECO:0007669"/>
    <property type="project" value="UniProtKB-UniRule"/>
</dbReference>
<dbReference type="GO" id="GO:0045156">
    <property type="term" value="F:electron transporter, transferring electrons within the cyclic electron transport pathway of photosynthesis activity"/>
    <property type="evidence" value="ECO:0007669"/>
    <property type="project" value="InterPro"/>
</dbReference>
<dbReference type="GO" id="GO:0005506">
    <property type="term" value="F:iron ion binding"/>
    <property type="evidence" value="ECO:0007669"/>
    <property type="project" value="UniProtKB-UniRule"/>
</dbReference>
<dbReference type="GO" id="GO:0016491">
    <property type="term" value="F:oxidoreductase activity"/>
    <property type="evidence" value="ECO:0007669"/>
    <property type="project" value="UniProtKB-KW"/>
</dbReference>
<dbReference type="GO" id="GO:0009772">
    <property type="term" value="P:photosynthetic electron transport in photosystem II"/>
    <property type="evidence" value="ECO:0007669"/>
    <property type="project" value="InterPro"/>
</dbReference>
<dbReference type="CDD" id="cd09288">
    <property type="entry name" value="Photosystem-II_D2"/>
    <property type="match status" value="1"/>
</dbReference>
<dbReference type="FunFam" id="1.20.85.10:FF:000001">
    <property type="entry name" value="photosystem II D2 protein-like"/>
    <property type="match status" value="1"/>
</dbReference>
<dbReference type="Gene3D" id="1.20.85.10">
    <property type="entry name" value="Photosystem II protein D1-like"/>
    <property type="match status" value="1"/>
</dbReference>
<dbReference type="HAMAP" id="MF_01383">
    <property type="entry name" value="PSII_PsbD_D2"/>
    <property type="match status" value="1"/>
</dbReference>
<dbReference type="InterPro" id="IPR055266">
    <property type="entry name" value="D1/D2"/>
</dbReference>
<dbReference type="InterPro" id="IPR036854">
    <property type="entry name" value="Photo_II_D1/D2_sf"/>
</dbReference>
<dbReference type="InterPro" id="IPR000484">
    <property type="entry name" value="Photo_RC_L/M"/>
</dbReference>
<dbReference type="InterPro" id="IPR055265">
    <property type="entry name" value="Photo_RC_L/M_CS"/>
</dbReference>
<dbReference type="InterPro" id="IPR005868">
    <property type="entry name" value="PSII_PsbD/D2"/>
</dbReference>
<dbReference type="NCBIfam" id="TIGR01152">
    <property type="entry name" value="psbD"/>
    <property type="match status" value="1"/>
</dbReference>
<dbReference type="PANTHER" id="PTHR33149:SF12">
    <property type="entry name" value="PHOTOSYSTEM II D2 PROTEIN"/>
    <property type="match status" value="1"/>
</dbReference>
<dbReference type="PANTHER" id="PTHR33149">
    <property type="entry name" value="PHOTOSYSTEM II PROTEIN D1"/>
    <property type="match status" value="1"/>
</dbReference>
<dbReference type="Pfam" id="PF00124">
    <property type="entry name" value="Photo_RC"/>
    <property type="match status" value="1"/>
</dbReference>
<dbReference type="PRINTS" id="PR00256">
    <property type="entry name" value="REACTNCENTRE"/>
</dbReference>
<dbReference type="SUPFAM" id="SSF81483">
    <property type="entry name" value="Bacterial photosystem II reaction centre, L and M subunits"/>
    <property type="match status" value="1"/>
</dbReference>
<dbReference type="PROSITE" id="PS00244">
    <property type="entry name" value="REACTION_CENTER"/>
    <property type="match status" value="1"/>
</dbReference>
<feature type="chain" id="PRO_0000359708" description="Photosystem II D2 protein">
    <location>
        <begin position="1"/>
        <end position="351"/>
    </location>
</feature>
<feature type="transmembrane region" description="Helical" evidence="1">
    <location>
        <begin position="39"/>
        <end position="59"/>
    </location>
</feature>
<feature type="transmembrane region" description="Helical" evidence="1">
    <location>
        <begin position="123"/>
        <end position="139"/>
    </location>
</feature>
<feature type="transmembrane region" description="Helical" evidence="1">
    <location>
        <begin position="151"/>
        <end position="164"/>
    </location>
</feature>
<feature type="transmembrane region" description="Helical" evidence="1">
    <location>
        <begin position="206"/>
        <end position="226"/>
    </location>
</feature>
<feature type="transmembrane region" description="Helical" evidence="1">
    <location>
        <begin position="277"/>
        <end position="293"/>
    </location>
</feature>
<feature type="binding site" description="axial binding residue" evidence="1">
    <location>
        <position position="116"/>
    </location>
    <ligand>
        <name>chlorophyll a</name>
        <dbReference type="ChEBI" id="CHEBI:58416"/>
        <label>ChlzD2</label>
    </ligand>
    <ligandPart>
        <name>Mg</name>
        <dbReference type="ChEBI" id="CHEBI:25107"/>
    </ligandPart>
</feature>
<feature type="binding site" evidence="1">
    <location>
        <position position="128"/>
    </location>
    <ligand>
        <name>pheophytin a</name>
        <dbReference type="ChEBI" id="CHEBI:136840"/>
        <label>D2</label>
    </ligand>
</feature>
<feature type="binding site" evidence="1">
    <location>
        <position position="141"/>
    </location>
    <ligand>
        <name>pheophytin a</name>
        <dbReference type="ChEBI" id="CHEBI:136840"/>
        <label>D2</label>
    </ligand>
</feature>
<feature type="binding site" description="axial binding residue" evidence="1">
    <location>
        <position position="196"/>
    </location>
    <ligand>
        <name>chlorophyll a</name>
        <dbReference type="ChEBI" id="CHEBI:58416"/>
        <label>PD2</label>
    </ligand>
    <ligandPart>
        <name>Mg</name>
        <dbReference type="ChEBI" id="CHEBI:25107"/>
    </ligandPart>
</feature>
<feature type="binding site" evidence="1">
    <location>
        <position position="213"/>
    </location>
    <ligand>
        <name>a plastoquinone</name>
        <dbReference type="ChEBI" id="CHEBI:17757"/>
        <label>Q(A)</label>
    </ligand>
</feature>
<feature type="binding site" evidence="1">
    <location>
        <position position="213"/>
    </location>
    <ligand>
        <name>Fe cation</name>
        <dbReference type="ChEBI" id="CHEBI:24875"/>
        <note>ligand shared with heterodimeric partner</note>
    </ligand>
</feature>
<feature type="binding site" evidence="1">
    <location>
        <position position="260"/>
    </location>
    <ligand>
        <name>a plastoquinone</name>
        <dbReference type="ChEBI" id="CHEBI:17757"/>
        <label>Q(A)</label>
    </ligand>
</feature>
<feature type="binding site" evidence="1">
    <location>
        <position position="267"/>
    </location>
    <ligand>
        <name>Fe cation</name>
        <dbReference type="ChEBI" id="CHEBI:24875"/>
        <note>ligand shared with heterodimeric partner</note>
    </ligand>
</feature>